<organism>
    <name type="scientific">Synechocystis sp. (strain ATCC 27184 / PCC 6803 / Kazusa)</name>
    <dbReference type="NCBI Taxonomy" id="1111708"/>
    <lineage>
        <taxon>Bacteria</taxon>
        <taxon>Bacillati</taxon>
        <taxon>Cyanobacteriota</taxon>
        <taxon>Cyanophyceae</taxon>
        <taxon>Synechococcales</taxon>
        <taxon>Merismopediaceae</taxon>
        <taxon>Synechocystis</taxon>
    </lineage>
</organism>
<accession>P74592</accession>
<sequence length="401" mass="44282">MIHHPPAGARDLLPLEVAQKARINDQLQQTFHRWGYQRIVTSTLEWLDTLVAGGAISANNVIQLQDSGEGRLGLRPELTASIARAVVTRMTDNQPQRLCYRANVFRNPPEGYHGKQMEFFQAGIELLFAGGVRADAEILLLLTDCLTQLGLSDWQLILGDAGLTRSLLAKLPPTLQATVRDCITRLDYVELSQLPYPDNEAKNLALQLFDLRGTVEEVLARLGKLDLQGECLGLVDRLQALLCLVAASGDGPANLVLDLSWLQPFDYYTGMVFQAVSRQADNCYVLGQGGRYDQLLSQYHPQQQSFPGTGFSLNIEELHQCLLELGTLPTSTAPIDYLVCPVDDTAEGATFRHAQQLRRQHPDRRVELDLGGRSPEELNTYAQAMAVGQIVWVGADGPVDL</sequence>
<feature type="chain" id="PRO_0000171071" description="ATP phosphoribosyltransferase regulatory subunit">
    <location>
        <begin position="1"/>
        <end position="401"/>
    </location>
</feature>
<protein>
    <recommendedName>
        <fullName>ATP phosphoribosyltransferase regulatory subunit</fullName>
    </recommendedName>
</protein>
<keyword id="KW-0028">Amino-acid biosynthesis</keyword>
<keyword id="KW-0963">Cytoplasm</keyword>
<keyword id="KW-0368">Histidine biosynthesis</keyword>
<keyword id="KW-1185">Reference proteome</keyword>
<gene>
    <name type="primary">hisZ</name>
    <name type="synonym">hisS2</name>
    <name type="ordered locus">slr1560</name>
</gene>
<comment type="function">
    <text evidence="1">Required for the first step of histidine biosynthesis. May allow the feedback regulation of ATP phosphoribosyltransferase activity by histidine (By similarity).</text>
</comment>
<comment type="pathway">
    <text>Amino-acid biosynthesis; L-histidine biosynthesis; L-histidine from 5-phospho-alpha-D-ribose 1-diphosphate: step 1/9.</text>
</comment>
<comment type="subunit">
    <text evidence="1">Heteromultimer composed of HisG and HisZ subunits.</text>
</comment>
<comment type="subcellular location">
    <subcellularLocation>
        <location evidence="1">Cytoplasm</location>
    </subcellularLocation>
</comment>
<comment type="miscellaneous">
    <text>This function is generally fulfilled by the C-terminal part of HisG, which is missing in some bacteria such as this one.</text>
</comment>
<comment type="similarity">
    <text evidence="2">Belongs to the class-II aminoacyl-tRNA synthetase family. HisZ subfamily.</text>
</comment>
<dbReference type="EMBL" id="BA000022">
    <property type="protein sequence ID" value="BAA18700.1"/>
    <property type="molecule type" value="Genomic_DNA"/>
</dbReference>
<dbReference type="PIR" id="S76788">
    <property type="entry name" value="S76788"/>
</dbReference>
<dbReference type="SMR" id="P74592"/>
<dbReference type="FunCoup" id="P74592">
    <property type="interactions" value="88"/>
</dbReference>
<dbReference type="STRING" id="1148.gene:10500472"/>
<dbReference type="PaxDb" id="1148-1653789"/>
<dbReference type="EnsemblBacteria" id="BAA18700">
    <property type="protein sequence ID" value="BAA18700"/>
    <property type="gene ID" value="BAA18700"/>
</dbReference>
<dbReference type="KEGG" id="syn:slr1560"/>
<dbReference type="eggNOG" id="COG3705">
    <property type="taxonomic scope" value="Bacteria"/>
</dbReference>
<dbReference type="InParanoid" id="P74592"/>
<dbReference type="PhylomeDB" id="P74592"/>
<dbReference type="UniPathway" id="UPA00031">
    <property type="reaction ID" value="UER00006"/>
</dbReference>
<dbReference type="Proteomes" id="UP000001425">
    <property type="component" value="Chromosome"/>
</dbReference>
<dbReference type="GO" id="GO:0005737">
    <property type="term" value="C:cytoplasm"/>
    <property type="evidence" value="ECO:0007669"/>
    <property type="project" value="UniProtKB-SubCell"/>
</dbReference>
<dbReference type="GO" id="GO:0004821">
    <property type="term" value="F:histidine-tRNA ligase activity"/>
    <property type="evidence" value="ECO:0000318"/>
    <property type="project" value="GO_Central"/>
</dbReference>
<dbReference type="GO" id="GO:0006427">
    <property type="term" value="P:histidyl-tRNA aminoacylation"/>
    <property type="evidence" value="ECO:0000318"/>
    <property type="project" value="GO_Central"/>
</dbReference>
<dbReference type="GO" id="GO:0000105">
    <property type="term" value="P:L-histidine biosynthetic process"/>
    <property type="evidence" value="ECO:0007669"/>
    <property type="project" value="UniProtKB-UniRule"/>
</dbReference>
<dbReference type="CDD" id="cd00773">
    <property type="entry name" value="HisRS-like_core"/>
    <property type="match status" value="1"/>
</dbReference>
<dbReference type="FunFam" id="3.30.930.10:FF:000218">
    <property type="entry name" value="ATP phosphoribosyltransferase regulatory subunit"/>
    <property type="match status" value="1"/>
</dbReference>
<dbReference type="Gene3D" id="3.40.50.800">
    <property type="entry name" value="Anticodon-binding domain"/>
    <property type="match status" value="1"/>
</dbReference>
<dbReference type="Gene3D" id="3.30.930.10">
    <property type="entry name" value="Bira Bifunctional Protein, Domain 2"/>
    <property type="match status" value="1"/>
</dbReference>
<dbReference type="HAMAP" id="MF_00125">
    <property type="entry name" value="HisZ"/>
    <property type="match status" value="1"/>
</dbReference>
<dbReference type="InterPro" id="IPR045864">
    <property type="entry name" value="aa-tRNA-synth_II/BPL/LPL"/>
</dbReference>
<dbReference type="InterPro" id="IPR036621">
    <property type="entry name" value="Anticodon-bd_dom_sf"/>
</dbReference>
<dbReference type="InterPro" id="IPR041715">
    <property type="entry name" value="HisRS-like_core"/>
</dbReference>
<dbReference type="InterPro" id="IPR004516">
    <property type="entry name" value="HisRS/HisZ"/>
</dbReference>
<dbReference type="InterPro" id="IPR004517">
    <property type="entry name" value="HisZ"/>
</dbReference>
<dbReference type="NCBIfam" id="TIGR00443">
    <property type="entry name" value="hisZ_biosyn_reg"/>
    <property type="match status" value="1"/>
</dbReference>
<dbReference type="NCBIfam" id="NF008940">
    <property type="entry name" value="PRK12292.2-3"/>
    <property type="match status" value="1"/>
</dbReference>
<dbReference type="PANTHER" id="PTHR43707:SF1">
    <property type="entry name" value="HISTIDINE--TRNA LIGASE, MITOCHONDRIAL-RELATED"/>
    <property type="match status" value="1"/>
</dbReference>
<dbReference type="PANTHER" id="PTHR43707">
    <property type="entry name" value="HISTIDYL-TRNA SYNTHETASE"/>
    <property type="match status" value="1"/>
</dbReference>
<dbReference type="Pfam" id="PF13393">
    <property type="entry name" value="tRNA-synt_His"/>
    <property type="match status" value="1"/>
</dbReference>
<dbReference type="PIRSF" id="PIRSF001549">
    <property type="entry name" value="His-tRNA_synth"/>
    <property type="match status" value="1"/>
</dbReference>
<dbReference type="SUPFAM" id="SSF52954">
    <property type="entry name" value="Class II aaRS ABD-related"/>
    <property type="match status" value="1"/>
</dbReference>
<dbReference type="SUPFAM" id="SSF55681">
    <property type="entry name" value="Class II aaRS and biotin synthetases"/>
    <property type="match status" value="1"/>
</dbReference>
<name>HISZ_SYNY3</name>
<evidence type="ECO:0000250" key="1"/>
<evidence type="ECO:0000305" key="2"/>
<reference key="1">
    <citation type="journal article" date="1996" name="DNA Res.">
        <title>Sequence analysis of the genome of the unicellular cyanobacterium Synechocystis sp. strain PCC6803. II. Sequence determination of the entire genome and assignment of potential protein-coding regions.</title>
        <authorList>
            <person name="Kaneko T."/>
            <person name="Sato S."/>
            <person name="Kotani H."/>
            <person name="Tanaka A."/>
            <person name="Asamizu E."/>
            <person name="Nakamura Y."/>
            <person name="Miyajima N."/>
            <person name="Hirosawa M."/>
            <person name="Sugiura M."/>
            <person name="Sasamoto S."/>
            <person name="Kimura T."/>
            <person name="Hosouchi T."/>
            <person name="Matsuno A."/>
            <person name="Muraki A."/>
            <person name="Nakazaki N."/>
            <person name="Naruo K."/>
            <person name="Okumura S."/>
            <person name="Shimpo S."/>
            <person name="Takeuchi C."/>
            <person name="Wada T."/>
            <person name="Watanabe A."/>
            <person name="Yamada M."/>
            <person name="Yasuda M."/>
            <person name="Tabata S."/>
        </authorList>
    </citation>
    <scope>NUCLEOTIDE SEQUENCE [LARGE SCALE GENOMIC DNA]</scope>
    <source>
        <strain>ATCC 27184 / PCC 6803 / Kazusa</strain>
    </source>
</reference>
<proteinExistence type="inferred from homology"/>